<organism>
    <name type="scientific">Actinobacillus pleuropneumoniae serotype 3 (strain JL03)</name>
    <dbReference type="NCBI Taxonomy" id="434271"/>
    <lineage>
        <taxon>Bacteria</taxon>
        <taxon>Pseudomonadati</taxon>
        <taxon>Pseudomonadota</taxon>
        <taxon>Gammaproteobacteria</taxon>
        <taxon>Pasteurellales</taxon>
        <taxon>Pasteurellaceae</taxon>
        <taxon>Actinobacillus</taxon>
    </lineage>
</organism>
<evidence type="ECO:0000255" key="1">
    <source>
        <dbReference type="HAMAP-Rule" id="MF_00503"/>
    </source>
</evidence>
<evidence type="ECO:0000305" key="2"/>
<sequence>MQVILLDKVAHLGSVGDQVTVKSGFARNFLIPQGKAVMATAANIAHFEARRAELEAKAAEALAAAQARAAKIAEIAAVSVSATAGDDGRLFGSISAKDIADALTAAGVAVAKSEVRLGEGPLRTTGEHEVKVHLHPEVNAAVTVNVVAE</sequence>
<keyword id="KW-0687">Ribonucleoprotein</keyword>
<keyword id="KW-0689">Ribosomal protein</keyword>
<keyword id="KW-0694">RNA-binding</keyword>
<keyword id="KW-0699">rRNA-binding</keyword>
<name>RL9_ACTPJ</name>
<proteinExistence type="inferred from homology"/>
<accession>B0BQB0</accession>
<feature type="chain" id="PRO_1000126857" description="Large ribosomal subunit protein bL9">
    <location>
        <begin position="1"/>
        <end position="149"/>
    </location>
</feature>
<comment type="function">
    <text evidence="1">Binds to the 23S rRNA.</text>
</comment>
<comment type="similarity">
    <text evidence="1">Belongs to the bacterial ribosomal protein bL9 family.</text>
</comment>
<dbReference type="EMBL" id="CP000687">
    <property type="protein sequence ID" value="ABY69745.1"/>
    <property type="molecule type" value="Genomic_DNA"/>
</dbReference>
<dbReference type="RefSeq" id="WP_005617644.1">
    <property type="nucleotide sequence ID" value="NC_010278.1"/>
</dbReference>
<dbReference type="SMR" id="B0BQB0"/>
<dbReference type="KEGG" id="apj:APJL_1189"/>
<dbReference type="HOGENOM" id="CLU_078938_4_1_6"/>
<dbReference type="Proteomes" id="UP000008547">
    <property type="component" value="Chromosome"/>
</dbReference>
<dbReference type="GO" id="GO:1990904">
    <property type="term" value="C:ribonucleoprotein complex"/>
    <property type="evidence" value="ECO:0007669"/>
    <property type="project" value="UniProtKB-KW"/>
</dbReference>
<dbReference type="GO" id="GO:0005840">
    <property type="term" value="C:ribosome"/>
    <property type="evidence" value="ECO:0007669"/>
    <property type="project" value="UniProtKB-KW"/>
</dbReference>
<dbReference type="GO" id="GO:0019843">
    <property type="term" value="F:rRNA binding"/>
    <property type="evidence" value="ECO:0007669"/>
    <property type="project" value="UniProtKB-UniRule"/>
</dbReference>
<dbReference type="GO" id="GO:0003735">
    <property type="term" value="F:structural constituent of ribosome"/>
    <property type="evidence" value="ECO:0007669"/>
    <property type="project" value="InterPro"/>
</dbReference>
<dbReference type="GO" id="GO:0006412">
    <property type="term" value="P:translation"/>
    <property type="evidence" value="ECO:0007669"/>
    <property type="project" value="UniProtKB-UniRule"/>
</dbReference>
<dbReference type="FunFam" id="3.40.5.10:FF:000001">
    <property type="entry name" value="50S ribosomal protein L9"/>
    <property type="match status" value="1"/>
</dbReference>
<dbReference type="Gene3D" id="3.10.430.100">
    <property type="entry name" value="Ribosomal protein L9, C-terminal domain"/>
    <property type="match status" value="1"/>
</dbReference>
<dbReference type="Gene3D" id="3.40.5.10">
    <property type="entry name" value="Ribosomal protein L9, N-terminal domain"/>
    <property type="match status" value="1"/>
</dbReference>
<dbReference type="HAMAP" id="MF_00503">
    <property type="entry name" value="Ribosomal_bL9"/>
    <property type="match status" value="1"/>
</dbReference>
<dbReference type="InterPro" id="IPR000244">
    <property type="entry name" value="Ribosomal_bL9"/>
</dbReference>
<dbReference type="InterPro" id="IPR009027">
    <property type="entry name" value="Ribosomal_bL9/RNase_H1_N"/>
</dbReference>
<dbReference type="InterPro" id="IPR020594">
    <property type="entry name" value="Ribosomal_bL9_bac/chp"/>
</dbReference>
<dbReference type="InterPro" id="IPR020069">
    <property type="entry name" value="Ribosomal_bL9_C"/>
</dbReference>
<dbReference type="InterPro" id="IPR036791">
    <property type="entry name" value="Ribosomal_bL9_C_sf"/>
</dbReference>
<dbReference type="InterPro" id="IPR020070">
    <property type="entry name" value="Ribosomal_bL9_N"/>
</dbReference>
<dbReference type="InterPro" id="IPR036935">
    <property type="entry name" value="Ribosomal_bL9_N_sf"/>
</dbReference>
<dbReference type="NCBIfam" id="TIGR00158">
    <property type="entry name" value="L9"/>
    <property type="match status" value="1"/>
</dbReference>
<dbReference type="PANTHER" id="PTHR21368">
    <property type="entry name" value="50S RIBOSOMAL PROTEIN L9"/>
    <property type="match status" value="1"/>
</dbReference>
<dbReference type="Pfam" id="PF03948">
    <property type="entry name" value="Ribosomal_L9_C"/>
    <property type="match status" value="1"/>
</dbReference>
<dbReference type="Pfam" id="PF01281">
    <property type="entry name" value="Ribosomal_L9_N"/>
    <property type="match status" value="1"/>
</dbReference>
<dbReference type="SUPFAM" id="SSF55658">
    <property type="entry name" value="L9 N-domain-like"/>
    <property type="match status" value="1"/>
</dbReference>
<dbReference type="SUPFAM" id="SSF55653">
    <property type="entry name" value="Ribosomal protein L9 C-domain"/>
    <property type="match status" value="1"/>
</dbReference>
<dbReference type="PROSITE" id="PS00651">
    <property type="entry name" value="RIBOSOMAL_L9"/>
    <property type="match status" value="1"/>
</dbReference>
<protein>
    <recommendedName>
        <fullName evidence="1">Large ribosomal subunit protein bL9</fullName>
    </recommendedName>
    <alternativeName>
        <fullName evidence="2">50S ribosomal protein L9</fullName>
    </alternativeName>
</protein>
<reference key="1">
    <citation type="journal article" date="2008" name="PLoS ONE">
        <title>Genome biology of Actinobacillus pleuropneumoniae JL03, an isolate of serotype 3 prevalent in China.</title>
        <authorList>
            <person name="Xu Z."/>
            <person name="Zhou Y."/>
            <person name="Li L."/>
            <person name="Zhou R."/>
            <person name="Xiao S."/>
            <person name="Wan Y."/>
            <person name="Zhang S."/>
            <person name="Wang K."/>
            <person name="Li W."/>
            <person name="Li L."/>
            <person name="Jin H."/>
            <person name="Kang M."/>
            <person name="Dalai B."/>
            <person name="Li T."/>
            <person name="Liu L."/>
            <person name="Cheng Y."/>
            <person name="Zhang L."/>
            <person name="Xu T."/>
            <person name="Zheng H."/>
            <person name="Pu S."/>
            <person name="Wang B."/>
            <person name="Gu W."/>
            <person name="Zhang X.L."/>
            <person name="Zhu G.-F."/>
            <person name="Wang S."/>
            <person name="Zhao G.-P."/>
            <person name="Chen H."/>
        </authorList>
    </citation>
    <scope>NUCLEOTIDE SEQUENCE [LARGE SCALE GENOMIC DNA]</scope>
    <source>
        <strain>JL03</strain>
    </source>
</reference>
<gene>
    <name evidence="1" type="primary">rplI</name>
    <name type="ordered locus">APJL_1189</name>
</gene>